<sequence length="374" mass="42640">MSLMDNWKTDMESYDEGGLVANPNFEVLATFRYDPGFARQSASKKEIFETPDPRLGLRDEDIRQQIINEDYSSYLRVREVNSGGDLLENIQHPDAWKHDCKTIVCQRVEDMLQVIYERFFLLDEQYQRIRIALSYFKIDFSTSLNDLLKLLVENLINCKEGNSEYHEKIQKMINERQCYKMRVLVSKTGDIRIEAIPMPMEPILKLTTDYDSVSTYFIKTMLNGFLIDSTINWDVVVSSEPLNASAFTSFKTTSRDHYARARVRMQTAINNLRGSEPTSSVSQCEILFSNKSGLLMEGSITNVAVIQKDPNGSKKYVTPRLATGCLCGTMRHYLLRLGLIEEGDIDIGSLTVGNEVLLFNGVMGCIKGTVKTKY</sequence>
<comment type="function">
    <text evidence="1">Converts 4-amino-4-deoxychorismate into 4-aminobenzoate (PABA) and pyruvate.</text>
</comment>
<comment type="catalytic activity">
    <reaction>
        <text>4-amino-4-deoxychorismate = 4-aminobenzoate + pyruvate + H(+)</text>
        <dbReference type="Rhea" id="RHEA:16201"/>
        <dbReference type="ChEBI" id="CHEBI:15361"/>
        <dbReference type="ChEBI" id="CHEBI:15378"/>
        <dbReference type="ChEBI" id="CHEBI:17836"/>
        <dbReference type="ChEBI" id="CHEBI:58406"/>
        <dbReference type="EC" id="4.1.3.38"/>
    </reaction>
</comment>
<comment type="cofactor">
    <cofactor evidence="1">
        <name>pyridoxal 5'-phosphate</name>
        <dbReference type="ChEBI" id="CHEBI:597326"/>
    </cofactor>
</comment>
<comment type="pathway">
    <text>Cofactor biosynthesis; tetrahydrofolate biosynthesis; 4-aminobenzoate from chorismate: step 2/2.</text>
</comment>
<comment type="subunit">
    <text evidence="1">Homodimer.</text>
</comment>
<comment type="subcellular location">
    <subcellularLocation>
        <location evidence="2">Cytoplasm</location>
    </subcellularLocation>
</comment>
<comment type="miscellaneous">
    <text evidence="3">Present with 768 molecules/cell in log phase SD medium.</text>
</comment>
<comment type="similarity">
    <text evidence="4">Belongs to the class-IV pyridoxal-phosphate-dependent aminotransferase family.</text>
</comment>
<name>PABC_YEAST</name>
<keyword id="KW-0002">3D-structure</keyword>
<keyword id="KW-0963">Cytoplasm</keyword>
<keyword id="KW-0289">Folate biosynthesis</keyword>
<keyword id="KW-0456">Lyase</keyword>
<keyword id="KW-0663">Pyridoxal phosphate</keyword>
<keyword id="KW-1185">Reference proteome</keyword>
<accession>Q03266</accession>
<accession>D6W0B6</accession>
<accession>Q03531</accession>
<dbReference type="EC" id="4.1.3.38"/>
<dbReference type="EMBL" id="Z49704">
    <property type="protein sequence ID" value="CAA89787.1"/>
    <property type="molecule type" value="Genomic_DNA"/>
</dbReference>
<dbReference type="EMBL" id="X80836">
    <property type="protein sequence ID" value="CAA56798.1"/>
    <property type="molecule type" value="Genomic_DNA"/>
</dbReference>
<dbReference type="EMBL" id="BK006946">
    <property type="protein sequence ID" value="DAA10190.1"/>
    <property type="molecule type" value="Genomic_DNA"/>
</dbReference>
<dbReference type="PIR" id="S54596">
    <property type="entry name" value="S54596"/>
</dbReference>
<dbReference type="RefSeq" id="NP_014016.1">
    <property type="nucleotide sequence ID" value="NM_001182796.1"/>
</dbReference>
<dbReference type="PDB" id="4K6N">
    <property type="method" value="X-ray"/>
    <property type="resolution" value="1.90 A"/>
    <property type="chains" value="A=1-374"/>
</dbReference>
<dbReference type="PDBsum" id="4K6N"/>
<dbReference type="SMR" id="Q03266"/>
<dbReference type="BioGRID" id="35469">
    <property type="interactions" value="138"/>
</dbReference>
<dbReference type="DIP" id="DIP-7986N"/>
<dbReference type="FunCoup" id="Q03266">
    <property type="interactions" value="160"/>
</dbReference>
<dbReference type="IntAct" id="Q03266">
    <property type="interactions" value="2"/>
</dbReference>
<dbReference type="MINT" id="Q03266"/>
<dbReference type="STRING" id="4932.YMR289W"/>
<dbReference type="GlyGen" id="Q03266">
    <property type="glycosylation" value="1 site"/>
</dbReference>
<dbReference type="PaxDb" id="4932-YMR289W"/>
<dbReference type="PeptideAtlas" id="Q03266"/>
<dbReference type="EnsemblFungi" id="YMR289W_mRNA">
    <property type="protein sequence ID" value="YMR289W"/>
    <property type="gene ID" value="YMR289W"/>
</dbReference>
<dbReference type="GeneID" id="855333"/>
<dbReference type="KEGG" id="sce:YMR289W"/>
<dbReference type="AGR" id="SGD:S000004902"/>
<dbReference type="SGD" id="S000004902">
    <property type="gene designation" value="ABZ2"/>
</dbReference>
<dbReference type="VEuPathDB" id="FungiDB:YMR289W"/>
<dbReference type="eggNOG" id="ENOG502QQMK">
    <property type="taxonomic scope" value="Eukaryota"/>
</dbReference>
<dbReference type="HOGENOM" id="CLU_020844_6_0_1"/>
<dbReference type="InParanoid" id="Q03266"/>
<dbReference type="OMA" id="CYKMRVL"/>
<dbReference type="OrthoDB" id="5288718at2759"/>
<dbReference type="BioCyc" id="YEAST:MONOMER3O-131"/>
<dbReference type="BRENDA" id="4.1.3.38">
    <property type="organism ID" value="984"/>
</dbReference>
<dbReference type="UniPathway" id="UPA00077">
    <property type="reaction ID" value="UER00150"/>
</dbReference>
<dbReference type="BioGRID-ORCS" id="855333">
    <property type="hits" value="0 hits in 10 CRISPR screens"/>
</dbReference>
<dbReference type="EvolutionaryTrace" id="Q03266"/>
<dbReference type="PRO" id="PR:Q03266"/>
<dbReference type="Proteomes" id="UP000002311">
    <property type="component" value="Chromosome XIII"/>
</dbReference>
<dbReference type="RNAct" id="Q03266">
    <property type="molecule type" value="protein"/>
</dbReference>
<dbReference type="GO" id="GO:0005737">
    <property type="term" value="C:cytoplasm"/>
    <property type="evidence" value="ECO:0007005"/>
    <property type="project" value="SGD"/>
</dbReference>
<dbReference type="GO" id="GO:0008696">
    <property type="term" value="F:4-amino-4-deoxychorismate lyase activity"/>
    <property type="evidence" value="ECO:0000314"/>
    <property type="project" value="SGD"/>
</dbReference>
<dbReference type="GO" id="GO:0019752">
    <property type="term" value="P:carboxylic acid metabolic process"/>
    <property type="evidence" value="ECO:0000318"/>
    <property type="project" value="GO_Central"/>
</dbReference>
<dbReference type="GO" id="GO:0046656">
    <property type="term" value="P:folic acid biosynthetic process"/>
    <property type="evidence" value="ECO:0000315"/>
    <property type="project" value="SGD"/>
</dbReference>
<dbReference type="GO" id="GO:0046654">
    <property type="term" value="P:tetrahydrofolate biosynthetic process"/>
    <property type="evidence" value="ECO:0007669"/>
    <property type="project" value="UniProtKB-UniPathway"/>
</dbReference>
<dbReference type="Gene3D" id="3.20.10.10">
    <property type="entry name" value="D-amino Acid Aminotransferase, subunit A, domain 2"/>
    <property type="match status" value="1"/>
</dbReference>
<dbReference type="InterPro" id="IPR001544">
    <property type="entry name" value="Aminotrans_IV"/>
</dbReference>
<dbReference type="InterPro" id="IPR036038">
    <property type="entry name" value="Aminotransferase-like"/>
</dbReference>
<dbReference type="InterPro" id="IPR043132">
    <property type="entry name" value="BCAT-like_C"/>
</dbReference>
<dbReference type="InterPro" id="IPR050571">
    <property type="entry name" value="Class-IV_PLP-Dep_Aminotrnsfr"/>
</dbReference>
<dbReference type="PANTHER" id="PTHR42743">
    <property type="entry name" value="AMINO-ACID AMINOTRANSFERASE"/>
    <property type="match status" value="1"/>
</dbReference>
<dbReference type="PANTHER" id="PTHR42743:SF11">
    <property type="entry name" value="AMINODEOXYCHORISMATE LYASE"/>
    <property type="match status" value="1"/>
</dbReference>
<dbReference type="Pfam" id="PF01063">
    <property type="entry name" value="Aminotran_4"/>
    <property type="match status" value="1"/>
</dbReference>
<dbReference type="SUPFAM" id="SSF56752">
    <property type="entry name" value="D-aminoacid aminotransferase-like PLP-dependent enzymes"/>
    <property type="match status" value="1"/>
</dbReference>
<gene>
    <name type="primary">ABZ2</name>
    <name type="ordered locus">YMR289W</name>
    <name type="ORF">YM8021.15</name>
</gene>
<protein>
    <recommendedName>
        <fullName>Aminodeoxychorismate lyase</fullName>
        <ecNumber>4.1.3.38</ecNumber>
    </recommendedName>
    <alternativeName>
        <fullName>4-amino-4-deoxychorismate lyase</fullName>
        <shortName>ADC lyase</shortName>
        <shortName>ADCL</shortName>
    </alternativeName>
</protein>
<reference key="1">
    <citation type="journal article" date="1997" name="Nature">
        <title>The nucleotide sequence of Saccharomyces cerevisiae chromosome XIII.</title>
        <authorList>
            <person name="Bowman S."/>
            <person name="Churcher C.M."/>
            <person name="Badcock K."/>
            <person name="Brown D."/>
            <person name="Chillingworth T."/>
            <person name="Connor R."/>
            <person name="Dedman K."/>
            <person name="Devlin K."/>
            <person name="Gentles S."/>
            <person name="Hamlin N."/>
            <person name="Hunt S."/>
            <person name="Jagels K."/>
            <person name="Lye G."/>
            <person name="Moule S."/>
            <person name="Odell C."/>
            <person name="Pearson D."/>
            <person name="Rajandream M.A."/>
            <person name="Rice P."/>
            <person name="Skelton J."/>
            <person name="Walsh S.V."/>
            <person name="Whitehead S."/>
            <person name="Barrell B.G."/>
        </authorList>
    </citation>
    <scope>NUCLEOTIDE SEQUENCE [LARGE SCALE GENOMIC DNA]</scope>
    <source>
        <strain>ATCC 204508 / S288c</strain>
    </source>
</reference>
<reference key="2">
    <citation type="journal article" date="2014" name="G3 (Bethesda)">
        <title>The reference genome sequence of Saccharomyces cerevisiae: Then and now.</title>
        <authorList>
            <person name="Engel S.R."/>
            <person name="Dietrich F.S."/>
            <person name="Fisk D.G."/>
            <person name="Binkley G."/>
            <person name="Balakrishnan R."/>
            <person name="Costanzo M.C."/>
            <person name="Dwight S.S."/>
            <person name="Hitz B.C."/>
            <person name="Karra K."/>
            <person name="Nash R.S."/>
            <person name="Weng S."/>
            <person name="Wong E.D."/>
            <person name="Lloyd P."/>
            <person name="Skrzypek M.S."/>
            <person name="Miyasato S.R."/>
            <person name="Simison M."/>
            <person name="Cherry J.M."/>
        </authorList>
    </citation>
    <scope>GENOME REANNOTATION</scope>
    <source>
        <strain>ATCC 204508 / S288c</strain>
    </source>
</reference>
<reference key="3">
    <citation type="journal article" date="2003" name="Nature">
        <title>Global analysis of protein localization in budding yeast.</title>
        <authorList>
            <person name="Huh W.-K."/>
            <person name="Falvo J.V."/>
            <person name="Gerke L.C."/>
            <person name="Carroll A.S."/>
            <person name="Howson R.W."/>
            <person name="Weissman J.S."/>
            <person name="O'Shea E.K."/>
        </authorList>
    </citation>
    <scope>SUBCELLULAR LOCATION [LARGE SCALE ANALYSIS]</scope>
</reference>
<reference key="4">
    <citation type="journal article" date="2003" name="Nature">
        <title>Global analysis of protein expression in yeast.</title>
        <authorList>
            <person name="Ghaemmaghami S."/>
            <person name="Huh W.-K."/>
            <person name="Bower K."/>
            <person name="Howson R.W."/>
            <person name="Belle A."/>
            <person name="Dephoure N."/>
            <person name="O'Shea E.K."/>
            <person name="Weissman J.S."/>
        </authorList>
    </citation>
    <scope>LEVEL OF PROTEIN EXPRESSION [LARGE SCALE ANALYSIS]</scope>
</reference>
<evidence type="ECO:0000250" key="1"/>
<evidence type="ECO:0000269" key="2">
    <source>
    </source>
</evidence>
<evidence type="ECO:0000269" key="3">
    <source>
    </source>
</evidence>
<evidence type="ECO:0000305" key="4"/>
<evidence type="ECO:0007829" key="5">
    <source>
        <dbReference type="PDB" id="4K6N"/>
    </source>
</evidence>
<organism>
    <name type="scientific">Saccharomyces cerevisiae (strain ATCC 204508 / S288c)</name>
    <name type="common">Baker's yeast</name>
    <dbReference type="NCBI Taxonomy" id="559292"/>
    <lineage>
        <taxon>Eukaryota</taxon>
        <taxon>Fungi</taxon>
        <taxon>Dikarya</taxon>
        <taxon>Ascomycota</taxon>
        <taxon>Saccharomycotina</taxon>
        <taxon>Saccharomycetes</taxon>
        <taxon>Saccharomycetales</taxon>
        <taxon>Saccharomycetaceae</taxon>
        <taxon>Saccharomyces</taxon>
    </lineage>
</organism>
<proteinExistence type="evidence at protein level"/>
<feature type="chain" id="PRO_0000203350" description="Aminodeoxychorismate lyase">
    <location>
        <begin position="1"/>
        <end position="374"/>
    </location>
</feature>
<feature type="strand" evidence="5">
    <location>
        <begin position="27"/>
        <end position="33"/>
    </location>
</feature>
<feature type="helix" evidence="5">
    <location>
        <begin position="35"/>
        <end position="37"/>
    </location>
</feature>
<feature type="strand" evidence="5">
    <location>
        <begin position="38"/>
        <end position="40"/>
    </location>
</feature>
<feature type="strand" evidence="5">
    <location>
        <begin position="47"/>
        <end position="50"/>
    </location>
</feature>
<feature type="helix" evidence="5">
    <location>
        <begin position="53"/>
        <end position="55"/>
    </location>
</feature>
<feature type="helix" evidence="5">
    <location>
        <begin position="60"/>
        <end position="67"/>
    </location>
</feature>
<feature type="helix" evidence="5">
    <location>
        <begin position="72"/>
        <end position="75"/>
    </location>
</feature>
<feature type="helix" evidence="5">
    <location>
        <begin position="86"/>
        <end position="90"/>
    </location>
</feature>
<feature type="helix" evidence="5">
    <location>
        <begin position="93"/>
        <end position="95"/>
    </location>
</feature>
<feature type="strand" evidence="5">
    <location>
        <begin position="100"/>
        <end position="103"/>
    </location>
</feature>
<feature type="helix" evidence="5">
    <location>
        <begin position="108"/>
        <end position="118"/>
    </location>
</feature>
<feature type="helix" evidence="5">
    <location>
        <begin position="122"/>
        <end position="135"/>
    </location>
</feature>
<feature type="helix" evidence="5">
    <location>
        <begin position="144"/>
        <end position="156"/>
    </location>
</feature>
<feature type="helix" evidence="5">
    <location>
        <begin position="165"/>
        <end position="174"/>
    </location>
</feature>
<feature type="strand" evidence="5">
    <location>
        <begin position="178"/>
        <end position="185"/>
    </location>
</feature>
<feature type="strand" evidence="5">
    <location>
        <begin position="191"/>
        <end position="198"/>
    </location>
</feature>
<feature type="helix" evidence="5">
    <location>
        <begin position="202"/>
        <end position="207"/>
    </location>
</feature>
<feature type="helix" evidence="5">
    <location>
        <begin position="208"/>
        <end position="210"/>
    </location>
</feature>
<feature type="helix" evidence="5">
    <location>
        <begin position="213"/>
        <end position="221"/>
    </location>
</feature>
<feature type="helix" evidence="5">
    <location>
        <begin position="223"/>
        <end position="225"/>
    </location>
</feature>
<feature type="strand" evidence="5">
    <location>
        <begin position="232"/>
        <end position="237"/>
    </location>
</feature>
<feature type="helix" evidence="5">
    <location>
        <begin position="246"/>
        <end position="249"/>
    </location>
</feature>
<feature type="helix" evidence="5">
    <location>
        <begin position="256"/>
        <end position="273"/>
    </location>
</feature>
<feature type="strand" evidence="5">
    <location>
        <begin position="283"/>
        <end position="289"/>
    </location>
</feature>
<feature type="strand" evidence="5">
    <location>
        <begin position="293"/>
        <end position="309"/>
    </location>
</feature>
<feature type="turn" evidence="5">
    <location>
        <begin position="310"/>
        <end position="312"/>
    </location>
</feature>
<feature type="strand" evidence="5">
    <location>
        <begin position="313"/>
        <end position="319"/>
    </location>
</feature>
<feature type="helix" evidence="5">
    <location>
        <begin position="321"/>
        <end position="323"/>
    </location>
</feature>
<feature type="helix" evidence="5">
    <location>
        <begin position="329"/>
        <end position="336"/>
    </location>
</feature>
<feature type="strand" evidence="5">
    <location>
        <begin position="339"/>
        <end position="343"/>
    </location>
</feature>
<feature type="helix" evidence="5">
    <location>
        <begin position="347"/>
        <end position="349"/>
    </location>
</feature>
<feature type="strand" evidence="5">
    <location>
        <begin position="355"/>
        <end position="360"/>
    </location>
</feature>
<feature type="turn" evidence="5">
    <location>
        <begin position="361"/>
        <end position="363"/>
    </location>
</feature>
<feature type="strand" evidence="5">
    <location>
        <begin position="364"/>
        <end position="373"/>
    </location>
</feature>